<keyword id="KW-0067">ATP-binding</keyword>
<keyword id="KW-0436">Ligase</keyword>
<keyword id="KW-0460">Magnesium</keyword>
<keyword id="KW-0479">Metal-binding</keyword>
<keyword id="KW-0547">Nucleotide-binding</keyword>
<keyword id="KW-0816">Tricarboxylic acid cycle</keyword>
<dbReference type="EC" id="6.2.1.5" evidence="1"/>
<dbReference type="EMBL" id="CP001177">
    <property type="protein sequence ID" value="ACJ81770.1"/>
    <property type="molecule type" value="Genomic_DNA"/>
</dbReference>
<dbReference type="SMR" id="B7HLG9"/>
<dbReference type="KEGG" id="bcr:BCAH187_A3883"/>
<dbReference type="HOGENOM" id="CLU_037430_0_2_9"/>
<dbReference type="UniPathway" id="UPA00223">
    <property type="reaction ID" value="UER00999"/>
</dbReference>
<dbReference type="Proteomes" id="UP000002214">
    <property type="component" value="Chromosome"/>
</dbReference>
<dbReference type="GO" id="GO:0005829">
    <property type="term" value="C:cytosol"/>
    <property type="evidence" value="ECO:0007669"/>
    <property type="project" value="TreeGrafter"/>
</dbReference>
<dbReference type="GO" id="GO:0042709">
    <property type="term" value="C:succinate-CoA ligase complex"/>
    <property type="evidence" value="ECO:0007669"/>
    <property type="project" value="TreeGrafter"/>
</dbReference>
<dbReference type="GO" id="GO:0005524">
    <property type="term" value="F:ATP binding"/>
    <property type="evidence" value="ECO:0007669"/>
    <property type="project" value="UniProtKB-UniRule"/>
</dbReference>
<dbReference type="GO" id="GO:0000287">
    <property type="term" value="F:magnesium ion binding"/>
    <property type="evidence" value="ECO:0007669"/>
    <property type="project" value="UniProtKB-UniRule"/>
</dbReference>
<dbReference type="GO" id="GO:0004775">
    <property type="term" value="F:succinate-CoA ligase (ADP-forming) activity"/>
    <property type="evidence" value="ECO:0007669"/>
    <property type="project" value="UniProtKB-UniRule"/>
</dbReference>
<dbReference type="GO" id="GO:0004776">
    <property type="term" value="F:succinate-CoA ligase (GDP-forming) activity"/>
    <property type="evidence" value="ECO:0007669"/>
    <property type="project" value="RHEA"/>
</dbReference>
<dbReference type="GO" id="GO:0006104">
    <property type="term" value="P:succinyl-CoA metabolic process"/>
    <property type="evidence" value="ECO:0007669"/>
    <property type="project" value="TreeGrafter"/>
</dbReference>
<dbReference type="GO" id="GO:0006099">
    <property type="term" value="P:tricarboxylic acid cycle"/>
    <property type="evidence" value="ECO:0007669"/>
    <property type="project" value="UniProtKB-UniRule"/>
</dbReference>
<dbReference type="FunFam" id="3.30.1490.20:FF:000002">
    <property type="entry name" value="Succinate--CoA ligase [ADP-forming] subunit beta"/>
    <property type="match status" value="1"/>
</dbReference>
<dbReference type="FunFam" id="3.30.470.20:FF:000002">
    <property type="entry name" value="Succinate--CoA ligase [ADP-forming] subunit beta"/>
    <property type="match status" value="1"/>
</dbReference>
<dbReference type="FunFam" id="3.40.50.261:FF:000001">
    <property type="entry name" value="Succinate--CoA ligase [ADP-forming] subunit beta"/>
    <property type="match status" value="1"/>
</dbReference>
<dbReference type="Gene3D" id="3.30.1490.20">
    <property type="entry name" value="ATP-grasp fold, A domain"/>
    <property type="match status" value="1"/>
</dbReference>
<dbReference type="Gene3D" id="3.30.470.20">
    <property type="entry name" value="ATP-grasp fold, B domain"/>
    <property type="match status" value="1"/>
</dbReference>
<dbReference type="Gene3D" id="3.40.50.261">
    <property type="entry name" value="Succinyl-CoA synthetase domains"/>
    <property type="match status" value="1"/>
</dbReference>
<dbReference type="HAMAP" id="MF_00558">
    <property type="entry name" value="Succ_CoA_beta"/>
    <property type="match status" value="1"/>
</dbReference>
<dbReference type="InterPro" id="IPR011761">
    <property type="entry name" value="ATP-grasp"/>
</dbReference>
<dbReference type="InterPro" id="IPR013650">
    <property type="entry name" value="ATP-grasp_succ-CoA_synth-type"/>
</dbReference>
<dbReference type="InterPro" id="IPR013815">
    <property type="entry name" value="ATP_grasp_subdomain_1"/>
</dbReference>
<dbReference type="InterPro" id="IPR005811">
    <property type="entry name" value="SUCC_ACL_C"/>
</dbReference>
<dbReference type="InterPro" id="IPR005809">
    <property type="entry name" value="Succ_CoA_ligase-like_bsu"/>
</dbReference>
<dbReference type="InterPro" id="IPR016102">
    <property type="entry name" value="Succinyl-CoA_synth-like"/>
</dbReference>
<dbReference type="NCBIfam" id="NF001913">
    <property type="entry name" value="PRK00696.1"/>
    <property type="match status" value="1"/>
</dbReference>
<dbReference type="NCBIfam" id="TIGR01016">
    <property type="entry name" value="sucCoAbeta"/>
    <property type="match status" value="1"/>
</dbReference>
<dbReference type="PANTHER" id="PTHR11815:SF10">
    <property type="entry name" value="SUCCINATE--COA LIGASE [GDP-FORMING] SUBUNIT BETA, MITOCHONDRIAL"/>
    <property type="match status" value="1"/>
</dbReference>
<dbReference type="PANTHER" id="PTHR11815">
    <property type="entry name" value="SUCCINYL-COA SYNTHETASE BETA CHAIN"/>
    <property type="match status" value="1"/>
</dbReference>
<dbReference type="Pfam" id="PF08442">
    <property type="entry name" value="ATP-grasp_2"/>
    <property type="match status" value="1"/>
</dbReference>
<dbReference type="Pfam" id="PF00549">
    <property type="entry name" value="Ligase_CoA"/>
    <property type="match status" value="1"/>
</dbReference>
<dbReference type="PIRSF" id="PIRSF001554">
    <property type="entry name" value="SucCS_beta"/>
    <property type="match status" value="1"/>
</dbReference>
<dbReference type="SUPFAM" id="SSF56059">
    <property type="entry name" value="Glutathione synthetase ATP-binding domain-like"/>
    <property type="match status" value="1"/>
</dbReference>
<dbReference type="SUPFAM" id="SSF52210">
    <property type="entry name" value="Succinyl-CoA synthetase domains"/>
    <property type="match status" value="1"/>
</dbReference>
<dbReference type="PROSITE" id="PS50975">
    <property type="entry name" value="ATP_GRASP"/>
    <property type="match status" value="1"/>
</dbReference>
<gene>
    <name evidence="1" type="primary">sucC</name>
    <name type="ordered locus">BCAH187_A3883</name>
</gene>
<proteinExistence type="inferred from homology"/>
<accession>B7HLG9</accession>
<evidence type="ECO:0000255" key="1">
    <source>
        <dbReference type="HAMAP-Rule" id="MF_00558"/>
    </source>
</evidence>
<sequence length="386" mass="41635">MNIHEYQGKAVLRSYGVSVPNGKVAFTVEEAVEAAKELGTDVCVVKAQIHAGGRGKAGGVKVAKNLDEVRTYAESILGTTLVTHQTGPEGKEVKRLLIEEGCDIKKEYYVGLVLDRATSQVVLMASEEGGTEIEEVAEKTPEKIFKEYIDPAVGLQGFQARRIAFNINIPKELVGQAVKFMMGLYRAFIEKDCSIAEINPLVTTGDGKVMALDAKLNFDSNALYRHKDILELRDLDEEDAKEIEASKYDLNYIPLDGNIGCMVNGAGLAMATMDIIKHYHGDPANFLDVGGGATAEKVTEAFKIILSDKNVKGIFVNIFGGIMKCDVIAEGVIEATKQVGLELPLVVRLEGTNVELGKKILNESGLNIVAAESMADGAQKIVSLVG</sequence>
<reference key="1">
    <citation type="submission" date="2008-10" db="EMBL/GenBank/DDBJ databases">
        <title>Genome sequence of Bacillus cereus AH187.</title>
        <authorList>
            <person name="Dodson R.J."/>
            <person name="Durkin A.S."/>
            <person name="Rosovitz M.J."/>
            <person name="Rasko D.A."/>
            <person name="Kolsto A.B."/>
            <person name="Okstad O.A."/>
            <person name="Ravel J."/>
            <person name="Sutton G."/>
        </authorList>
    </citation>
    <scope>NUCLEOTIDE SEQUENCE [LARGE SCALE GENOMIC DNA]</scope>
    <source>
        <strain>AH187</strain>
    </source>
</reference>
<comment type="function">
    <text evidence="1">Succinyl-CoA synthetase functions in the citric acid cycle (TCA), coupling the hydrolysis of succinyl-CoA to the synthesis of either ATP or GTP and thus represents the only step of substrate-level phosphorylation in the TCA. The beta subunit provides nucleotide specificity of the enzyme and binds the substrate succinate, while the binding sites for coenzyme A and phosphate are found in the alpha subunit.</text>
</comment>
<comment type="catalytic activity">
    <reaction evidence="1">
        <text>succinate + ATP + CoA = succinyl-CoA + ADP + phosphate</text>
        <dbReference type="Rhea" id="RHEA:17661"/>
        <dbReference type="ChEBI" id="CHEBI:30031"/>
        <dbReference type="ChEBI" id="CHEBI:30616"/>
        <dbReference type="ChEBI" id="CHEBI:43474"/>
        <dbReference type="ChEBI" id="CHEBI:57287"/>
        <dbReference type="ChEBI" id="CHEBI:57292"/>
        <dbReference type="ChEBI" id="CHEBI:456216"/>
        <dbReference type="EC" id="6.2.1.5"/>
    </reaction>
    <physiologicalReaction direction="right-to-left" evidence="1">
        <dbReference type="Rhea" id="RHEA:17663"/>
    </physiologicalReaction>
</comment>
<comment type="catalytic activity">
    <reaction evidence="1">
        <text>GTP + succinate + CoA = succinyl-CoA + GDP + phosphate</text>
        <dbReference type="Rhea" id="RHEA:22120"/>
        <dbReference type="ChEBI" id="CHEBI:30031"/>
        <dbReference type="ChEBI" id="CHEBI:37565"/>
        <dbReference type="ChEBI" id="CHEBI:43474"/>
        <dbReference type="ChEBI" id="CHEBI:57287"/>
        <dbReference type="ChEBI" id="CHEBI:57292"/>
        <dbReference type="ChEBI" id="CHEBI:58189"/>
    </reaction>
    <physiologicalReaction direction="right-to-left" evidence="1">
        <dbReference type="Rhea" id="RHEA:22122"/>
    </physiologicalReaction>
</comment>
<comment type="cofactor">
    <cofactor evidence="1">
        <name>Mg(2+)</name>
        <dbReference type="ChEBI" id="CHEBI:18420"/>
    </cofactor>
    <text evidence="1">Binds 1 Mg(2+) ion per subunit.</text>
</comment>
<comment type="pathway">
    <text evidence="1">Carbohydrate metabolism; tricarboxylic acid cycle; succinate from succinyl-CoA (ligase route): step 1/1.</text>
</comment>
<comment type="subunit">
    <text evidence="1">Heterotetramer of two alpha and two beta subunits.</text>
</comment>
<comment type="similarity">
    <text evidence="1">Belongs to the succinate/malate CoA ligase beta subunit family.</text>
</comment>
<organism>
    <name type="scientific">Bacillus cereus (strain AH187)</name>
    <dbReference type="NCBI Taxonomy" id="405534"/>
    <lineage>
        <taxon>Bacteria</taxon>
        <taxon>Bacillati</taxon>
        <taxon>Bacillota</taxon>
        <taxon>Bacilli</taxon>
        <taxon>Bacillales</taxon>
        <taxon>Bacillaceae</taxon>
        <taxon>Bacillus</taxon>
        <taxon>Bacillus cereus group</taxon>
    </lineage>
</organism>
<protein>
    <recommendedName>
        <fullName evidence="1">Succinate--CoA ligase [ADP-forming] subunit beta</fullName>
        <ecNumber evidence="1">6.2.1.5</ecNumber>
    </recommendedName>
    <alternativeName>
        <fullName evidence="1">Succinyl-CoA synthetase subunit beta</fullName>
        <shortName evidence="1">SCS-beta</shortName>
    </alternativeName>
</protein>
<name>SUCC_BACC7</name>
<feature type="chain" id="PRO_1000129161" description="Succinate--CoA ligase [ADP-forming] subunit beta">
    <location>
        <begin position="1"/>
        <end position="386"/>
    </location>
</feature>
<feature type="domain" description="ATP-grasp" evidence="1">
    <location>
        <begin position="9"/>
        <end position="244"/>
    </location>
</feature>
<feature type="binding site" evidence="1">
    <location>
        <position position="46"/>
    </location>
    <ligand>
        <name>ATP</name>
        <dbReference type="ChEBI" id="CHEBI:30616"/>
    </ligand>
</feature>
<feature type="binding site" evidence="1">
    <location>
        <begin position="53"/>
        <end position="55"/>
    </location>
    <ligand>
        <name>ATP</name>
        <dbReference type="ChEBI" id="CHEBI:30616"/>
    </ligand>
</feature>
<feature type="binding site" evidence="1">
    <location>
        <position position="99"/>
    </location>
    <ligand>
        <name>ATP</name>
        <dbReference type="ChEBI" id="CHEBI:30616"/>
    </ligand>
</feature>
<feature type="binding site" evidence="1">
    <location>
        <position position="102"/>
    </location>
    <ligand>
        <name>ATP</name>
        <dbReference type="ChEBI" id="CHEBI:30616"/>
    </ligand>
</feature>
<feature type="binding site" evidence="1">
    <location>
        <position position="107"/>
    </location>
    <ligand>
        <name>ATP</name>
        <dbReference type="ChEBI" id="CHEBI:30616"/>
    </ligand>
</feature>
<feature type="binding site" evidence="1">
    <location>
        <position position="199"/>
    </location>
    <ligand>
        <name>Mg(2+)</name>
        <dbReference type="ChEBI" id="CHEBI:18420"/>
    </ligand>
</feature>
<feature type="binding site" evidence="1">
    <location>
        <position position="213"/>
    </location>
    <ligand>
        <name>Mg(2+)</name>
        <dbReference type="ChEBI" id="CHEBI:18420"/>
    </ligand>
</feature>
<feature type="binding site" evidence="1">
    <location>
        <position position="264"/>
    </location>
    <ligand>
        <name>substrate</name>
        <note>ligand shared with subunit alpha</note>
    </ligand>
</feature>
<feature type="binding site" evidence="1">
    <location>
        <begin position="321"/>
        <end position="323"/>
    </location>
    <ligand>
        <name>substrate</name>
        <note>ligand shared with subunit alpha</note>
    </ligand>
</feature>